<proteinExistence type="evidence at transcript level"/>
<gene>
    <name type="primary">GPXHA-2</name>
</gene>
<reference key="1">
    <citation type="submission" date="1997-10" db="EMBL/GenBank/DDBJ databases">
        <authorList>
            <person name="Drevet J.R."/>
            <person name="Gagne G."/>
            <person name="Tourvieille de Labrouhe D."/>
            <person name="Nicolas P."/>
            <person name="Dufaure J.-P."/>
            <person name="Ledoigt G."/>
            <person name="Roeckel-Drevet P."/>
        </authorList>
    </citation>
    <scope>NUCLEOTIDE SEQUENCE [MRNA]</scope>
</reference>
<evidence type="ECO:0000250" key="1">
    <source>
        <dbReference type="UniProtKB" id="O70325"/>
    </source>
</evidence>
<evidence type="ECO:0000250" key="2">
    <source>
        <dbReference type="UniProtKB" id="P36968"/>
    </source>
</evidence>
<evidence type="ECO:0000305" key="3"/>
<name>GPX4_HELAN</name>
<feature type="chain" id="PRO_0000066630" description="Probable phospholipid hydroperoxide glutathione peroxidase">
    <location>
        <begin position="1"/>
        <end position="180"/>
    </location>
</feature>
<feature type="active site" evidence="2">
    <location>
        <position position="54"/>
    </location>
</feature>
<keyword id="KW-0963">Cytoplasm</keyword>
<keyword id="KW-0560">Oxidoreductase</keyword>
<keyword id="KW-0575">Peroxidase</keyword>
<comment type="function">
    <text evidence="1">Protects cells and enzymes from oxidative damage, by catalyzing the reduction of hydrogen peroxide, lipid peroxides and organic hydroperoxide, by glutathione.</text>
</comment>
<comment type="catalytic activity">
    <reaction evidence="2">
        <text>a hydroperoxy polyunsaturated fatty acid + 2 glutathione = a hydroxy polyunsaturated fatty acid + glutathione disulfide + H2O</text>
        <dbReference type="Rhea" id="RHEA:19057"/>
        <dbReference type="ChEBI" id="CHEBI:15377"/>
        <dbReference type="ChEBI" id="CHEBI:57925"/>
        <dbReference type="ChEBI" id="CHEBI:58297"/>
        <dbReference type="ChEBI" id="CHEBI:131871"/>
        <dbReference type="ChEBI" id="CHEBI:134019"/>
        <dbReference type="EC" id="1.11.1.12"/>
    </reaction>
</comment>
<comment type="subcellular location">
    <subcellularLocation>
        <location evidence="3">Cytoplasm</location>
    </subcellularLocation>
</comment>
<comment type="similarity">
    <text evidence="3">Belongs to the glutathione peroxidase family.</text>
</comment>
<dbReference type="EC" id="1.11.1.12"/>
<dbReference type="EMBL" id="Y14707">
    <property type="protein sequence ID" value="CAA75009.1"/>
    <property type="molecule type" value="mRNA"/>
</dbReference>
<dbReference type="PIR" id="T12633">
    <property type="entry name" value="T12633"/>
</dbReference>
<dbReference type="SMR" id="O23968"/>
<dbReference type="PeroxiBase" id="2650">
    <property type="entry name" value="HaGPx06"/>
</dbReference>
<dbReference type="GO" id="GO:0005737">
    <property type="term" value="C:cytoplasm"/>
    <property type="evidence" value="ECO:0007669"/>
    <property type="project" value="UniProtKB-SubCell"/>
</dbReference>
<dbReference type="GO" id="GO:0047066">
    <property type="term" value="F:phospholipid-hydroperoxide glutathione peroxidase activity"/>
    <property type="evidence" value="ECO:0007669"/>
    <property type="project" value="UniProtKB-EC"/>
</dbReference>
<dbReference type="GO" id="GO:0006979">
    <property type="term" value="P:response to oxidative stress"/>
    <property type="evidence" value="ECO:0007669"/>
    <property type="project" value="InterPro"/>
</dbReference>
<dbReference type="CDD" id="cd00340">
    <property type="entry name" value="GSH_Peroxidase"/>
    <property type="match status" value="1"/>
</dbReference>
<dbReference type="FunFam" id="3.40.30.10:FF:000025">
    <property type="entry name" value="Glutathione peroxidase"/>
    <property type="match status" value="1"/>
</dbReference>
<dbReference type="Gene3D" id="3.40.30.10">
    <property type="entry name" value="Glutaredoxin"/>
    <property type="match status" value="1"/>
</dbReference>
<dbReference type="InterPro" id="IPR000889">
    <property type="entry name" value="Glutathione_peroxidase"/>
</dbReference>
<dbReference type="InterPro" id="IPR029759">
    <property type="entry name" value="GPX_AS"/>
</dbReference>
<dbReference type="InterPro" id="IPR029760">
    <property type="entry name" value="GPX_CS"/>
</dbReference>
<dbReference type="InterPro" id="IPR036249">
    <property type="entry name" value="Thioredoxin-like_sf"/>
</dbReference>
<dbReference type="InterPro" id="IPR013766">
    <property type="entry name" value="Thioredoxin_domain"/>
</dbReference>
<dbReference type="PANTHER" id="PTHR11592">
    <property type="entry name" value="GLUTATHIONE PEROXIDASE"/>
    <property type="match status" value="1"/>
</dbReference>
<dbReference type="PANTHER" id="PTHR11592:SF118">
    <property type="entry name" value="PHOSPHOLIPID HYDROPEROXIDE GLUTATHIONE PEROXIDASE 6, MITOCHONDRIAL-RELATED"/>
    <property type="match status" value="1"/>
</dbReference>
<dbReference type="Pfam" id="PF00255">
    <property type="entry name" value="GSHPx"/>
    <property type="match status" value="1"/>
</dbReference>
<dbReference type="PIRSF" id="PIRSF000303">
    <property type="entry name" value="Glutathion_perox"/>
    <property type="match status" value="1"/>
</dbReference>
<dbReference type="PRINTS" id="PR01011">
    <property type="entry name" value="GLUTPROXDASE"/>
</dbReference>
<dbReference type="SUPFAM" id="SSF52833">
    <property type="entry name" value="Thioredoxin-like"/>
    <property type="match status" value="1"/>
</dbReference>
<dbReference type="PROSITE" id="PS00460">
    <property type="entry name" value="GLUTATHIONE_PEROXID_1"/>
    <property type="match status" value="1"/>
</dbReference>
<dbReference type="PROSITE" id="PS00763">
    <property type="entry name" value="GLUTATHIONE_PEROXID_2"/>
    <property type="match status" value="1"/>
</dbReference>
<dbReference type="PROSITE" id="PS51355">
    <property type="entry name" value="GLUTATHIONE_PEROXID_3"/>
    <property type="match status" value="1"/>
</dbReference>
<accession>O23968</accession>
<organism>
    <name type="scientific">Helianthus annuus</name>
    <name type="common">Common sunflower</name>
    <dbReference type="NCBI Taxonomy" id="4232"/>
    <lineage>
        <taxon>Eukaryota</taxon>
        <taxon>Viridiplantae</taxon>
        <taxon>Streptophyta</taxon>
        <taxon>Embryophyta</taxon>
        <taxon>Tracheophyta</taxon>
        <taxon>Spermatophyta</taxon>
        <taxon>Magnoliopsida</taxon>
        <taxon>eudicotyledons</taxon>
        <taxon>Gunneridae</taxon>
        <taxon>Pentapetalae</taxon>
        <taxon>asterids</taxon>
        <taxon>campanulids</taxon>
        <taxon>Asterales</taxon>
        <taxon>Asteraceae</taxon>
        <taxon>Asteroideae</taxon>
        <taxon>Heliantheae alliance</taxon>
        <taxon>Heliantheae</taxon>
        <taxon>Helianthus</taxon>
    </lineage>
</organism>
<protein>
    <recommendedName>
        <fullName>Probable phospholipid hydroperoxide glutathione peroxidase</fullName>
        <shortName>PHGPx</shortName>
        <ecNumber>1.11.1.12</ecNumber>
    </recommendedName>
    <alternativeName>
        <fullName>Glutathione peroxidase 2</fullName>
    </alternativeName>
</protein>
<sequence length="180" mass="20174">MATQTVFDFPDDVLQQPPMPADNAFSDKDVKGQDVELSKYKGKVLLIVNVASQCGFTNSNYPELTTLYQKYKDQGFEILAFPCNQFGGQEPGSNEEIQVFACTRFKAEYPVFSKVNVNGKEADPLYKFLKSSKGGFLGDSIKWNFTKFLVDREGKVVDRYAPTTSPLSIEKDIKKLLNVA</sequence>